<keyword id="KW-0680">Restriction system</keyword>
<reference key="1">
    <citation type="journal article" date="1991" name="Nucleic Acids Res.">
        <title>Isolation and genetic structure of the AvaII isoschizomeric restriction-modification system HgiBI from Herpetosiphon giganteus Hpg5: M.HgiBI reveals high homology to M.BanI.</title>
        <authorList>
            <person name="Duesterhoeft A."/>
            <person name="Erdmann D."/>
            <person name="Kroeger M."/>
        </authorList>
    </citation>
    <scope>NUCLEOTIDE SEQUENCE [GENOMIC DNA]</scope>
    <source>
        <strain>HPG5</strain>
    </source>
</reference>
<reference key="2">
    <citation type="journal article" date="1995" name="Gene">
        <title>Organization and gene expression within restriction-modification systems of Herpetosiphon giganteus.</title>
        <authorList>
            <person name="Kroeger M."/>
            <person name="Blum E."/>
            <person name="Deppe E."/>
            <person name="Duesterhoeft A."/>
            <person name="Erdmann D."/>
            <person name="Kilz S."/>
            <person name="Meyer-Rogge S."/>
            <person name="Moestl D."/>
        </authorList>
    </citation>
    <scope>DISCUSSION OF SEQUENCE</scope>
</reference>
<proteinExistence type="predicted"/>
<organism>
    <name type="scientific">Herpetosiphon aurantiacus</name>
    <name type="common">Herpetosiphon giganteus</name>
    <dbReference type="NCBI Taxonomy" id="65"/>
    <lineage>
        <taxon>Bacteria</taxon>
        <taxon>Bacillati</taxon>
        <taxon>Chloroflexota</taxon>
        <taxon>Chloroflexia</taxon>
        <taxon>Herpetosiphonales</taxon>
        <taxon>Herpetosiphonaceae</taxon>
        <taxon>Herpetosiphon</taxon>
    </lineage>
</organism>
<dbReference type="EMBL" id="X55137">
    <property type="protein sequence ID" value="CAA38926.1"/>
    <property type="molecule type" value="Genomic_DNA"/>
</dbReference>
<dbReference type="PIR" id="S22306">
    <property type="entry name" value="S22306"/>
</dbReference>
<dbReference type="GO" id="GO:0009307">
    <property type="term" value="P:DNA restriction-modification system"/>
    <property type="evidence" value="ECO:0007669"/>
    <property type="project" value="UniProtKB-KW"/>
</dbReference>
<comment type="function">
    <text>Could be a silencing control element for the regulation of the restriction system.</text>
</comment>
<feature type="chain" id="PRO_0000066142" description="Uncharacterized 10.2 kDa protein in HgiBIM 5'region">
    <location>
        <begin position="1" status="less than"/>
        <end position="82"/>
    </location>
</feature>
<feature type="non-terminal residue">
    <location>
        <position position="1"/>
    </location>
</feature>
<sequence length="82" mass="8963">SMPPQVMVEINGMLNDGCTAFHEAKQVVEGNTIKIEVTTIRPKDAMCTQEISPFSTTIQVDAQLQPGEYTILVNDVAEALKL</sequence>
<protein>
    <recommendedName>
        <fullName>Uncharacterized 10.2 kDa protein in HgiBIM 5'region</fullName>
    </recommendedName>
    <alternativeName>
        <fullName>ORF11</fullName>
    </alternativeName>
    <alternativeName>
        <fullName>ORFC</fullName>
    </alternativeName>
</protein>
<name>YB1M_HERAU</name>
<accession>P25277</accession>